<reference key="1">
    <citation type="journal article" date="2005" name="Science">
        <title>The transcriptional landscape of the mammalian genome.</title>
        <authorList>
            <person name="Carninci P."/>
            <person name="Kasukawa T."/>
            <person name="Katayama S."/>
            <person name="Gough J."/>
            <person name="Frith M.C."/>
            <person name="Maeda N."/>
            <person name="Oyama R."/>
            <person name="Ravasi T."/>
            <person name="Lenhard B."/>
            <person name="Wells C."/>
            <person name="Kodzius R."/>
            <person name="Shimokawa K."/>
            <person name="Bajic V.B."/>
            <person name="Brenner S.E."/>
            <person name="Batalov S."/>
            <person name="Forrest A.R."/>
            <person name="Zavolan M."/>
            <person name="Davis M.J."/>
            <person name="Wilming L.G."/>
            <person name="Aidinis V."/>
            <person name="Allen J.E."/>
            <person name="Ambesi-Impiombato A."/>
            <person name="Apweiler R."/>
            <person name="Aturaliya R.N."/>
            <person name="Bailey T.L."/>
            <person name="Bansal M."/>
            <person name="Baxter L."/>
            <person name="Beisel K.W."/>
            <person name="Bersano T."/>
            <person name="Bono H."/>
            <person name="Chalk A.M."/>
            <person name="Chiu K.P."/>
            <person name="Choudhary V."/>
            <person name="Christoffels A."/>
            <person name="Clutterbuck D.R."/>
            <person name="Crowe M.L."/>
            <person name="Dalla E."/>
            <person name="Dalrymple B.P."/>
            <person name="de Bono B."/>
            <person name="Della Gatta G."/>
            <person name="di Bernardo D."/>
            <person name="Down T."/>
            <person name="Engstrom P."/>
            <person name="Fagiolini M."/>
            <person name="Faulkner G."/>
            <person name="Fletcher C.F."/>
            <person name="Fukushima T."/>
            <person name="Furuno M."/>
            <person name="Futaki S."/>
            <person name="Gariboldi M."/>
            <person name="Georgii-Hemming P."/>
            <person name="Gingeras T.R."/>
            <person name="Gojobori T."/>
            <person name="Green R.E."/>
            <person name="Gustincich S."/>
            <person name="Harbers M."/>
            <person name="Hayashi Y."/>
            <person name="Hensch T.K."/>
            <person name="Hirokawa N."/>
            <person name="Hill D."/>
            <person name="Huminiecki L."/>
            <person name="Iacono M."/>
            <person name="Ikeo K."/>
            <person name="Iwama A."/>
            <person name="Ishikawa T."/>
            <person name="Jakt M."/>
            <person name="Kanapin A."/>
            <person name="Katoh M."/>
            <person name="Kawasawa Y."/>
            <person name="Kelso J."/>
            <person name="Kitamura H."/>
            <person name="Kitano H."/>
            <person name="Kollias G."/>
            <person name="Krishnan S.P."/>
            <person name="Kruger A."/>
            <person name="Kummerfeld S.K."/>
            <person name="Kurochkin I.V."/>
            <person name="Lareau L.F."/>
            <person name="Lazarevic D."/>
            <person name="Lipovich L."/>
            <person name="Liu J."/>
            <person name="Liuni S."/>
            <person name="McWilliam S."/>
            <person name="Madan Babu M."/>
            <person name="Madera M."/>
            <person name="Marchionni L."/>
            <person name="Matsuda H."/>
            <person name="Matsuzawa S."/>
            <person name="Miki H."/>
            <person name="Mignone F."/>
            <person name="Miyake S."/>
            <person name="Morris K."/>
            <person name="Mottagui-Tabar S."/>
            <person name="Mulder N."/>
            <person name="Nakano N."/>
            <person name="Nakauchi H."/>
            <person name="Ng P."/>
            <person name="Nilsson R."/>
            <person name="Nishiguchi S."/>
            <person name="Nishikawa S."/>
            <person name="Nori F."/>
            <person name="Ohara O."/>
            <person name="Okazaki Y."/>
            <person name="Orlando V."/>
            <person name="Pang K.C."/>
            <person name="Pavan W.J."/>
            <person name="Pavesi G."/>
            <person name="Pesole G."/>
            <person name="Petrovsky N."/>
            <person name="Piazza S."/>
            <person name="Reed J."/>
            <person name="Reid J.F."/>
            <person name="Ring B.Z."/>
            <person name="Ringwald M."/>
            <person name="Rost B."/>
            <person name="Ruan Y."/>
            <person name="Salzberg S.L."/>
            <person name="Sandelin A."/>
            <person name="Schneider C."/>
            <person name="Schoenbach C."/>
            <person name="Sekiguchi K."/>
            <person name="Semple C.A."/>
            <person name="Seno S."/>
            <person name="Sessa L."/>
            <person name="Sheng Y."/>
            <person name="Shibata Y."/>
            <person name="Shimada H."/>
            <person name="Shimada K."/>
            <person name="Silva D."/>
            <person name="Sinclair B."/>
            <person name="Sperling S."/>
            <person name="Stupka E."/>
            <person name="Sugiura K."/>
            <person name="Sultana R."/>
            <person name="Takenaka Y."/>
            <person name="Taki K."/>
            <person name="Tammoja K."/>
            <person name="Tan S.L."/>
            <person name="Tang S."/>
            <person name="Taylor M.S."/>
            <person name="Tegner J."/>
            <person name="Teichmann S.A."/>
            <person name="Ueda H.R."/>
            <person name="van Nimwegen E."/>
            <person name="Verardo R."/>
            <person name="Wei C.L."/>
            <person name="Yagi K."/>
            <person name="Yamanishi H."/>
            <person name="Zabarovsky E."/>
            <person name="Zhu S."/>
            <person name="Zimmer A."/>
            <person name="Hide W."/>
            <person name="Bult C."/>
            <person name="Grimmond S.M."/>
            <person name="Teasdale R.D."/>
            <person name="Liu E.T."/>
            <person name="Brusic V."/>
            <person name="Quackenbush J."/>
            <person name="Wahlestedt C."/>
            <person name="Mattick J.S."/>
            <person name="Hume D.A."/>
            <person name="Kai C."/>
            <person name="Sasaki D."/>
            <person name="Tomaru Y."/>
            <person name="Fukuda S."/>
            <person name="Kanamori-Katayama M."/>
            <person name="Suzuki M."/>
            <person name="Aoki J."/>
            <person name="Arakawa T."/>
            <person name="Iida J."/>
            <person name="Imamura K."/>
            <person name="Itoh M."/>
            <person name="Kato T."/>
            <person name="Kawaji H."/>
            <person name="Kawagashira N."/>
            <person name="Kawashima T."/>
            <person name="Kojima M."/>
            <person name="Kondo S."/>
            <person name="Konno H."/>
            <person name="Nakano K."/>
            <person name="Ninomiya N."/>
            <person name="Nishio T."/>
            <person name="Okada M."/>
            <person name="Plessy C."/>
            <person name="Shibata K."/>
            <person name="Shiraki T."/>
            <person name="Suzuki S."/>
            <person name="Tagami M."/>
            <person name="Waki K."/>
            <person name="Watahiki A."/>
            <person name="Okamura-Oho Y."/>
            <person name="Suzuki H."/>
            <person name="Kawai J."/>
            <person name="Hayashizaki Y."/>
        </authorList>
    </citation>
    <scope>NUCLEOTIDE SEQUENCE [LARGE SCALE MRNA]</scope>
    <source>
        <strain>C57BL/6J</strain>
        <tissue>Corpora quadrigemina</tissue>
        <tissue>Hypothalamus</tissue>
        <tissue>Olfactory bulb</tissue>
    </source>
</reference>
<reference key="2">
    <citation type="journal article" date="2004" name="Genome Res.">
        <title>The status, quality, and expansion of the NIH full-length cDNA project: the Mammalian Gene Collection (MGC).</title>
        <authorList>
            <consortium name="The MGC Project Team"/>
        </authorList>
    </citation>
    <scope>NUCLEOTIDE SEQUENCE [LARGE SCALE MRNA]</scope>
    <source>
        <strain>FVB/N</strain>
        <tissue>Mammary gland</tissue>
    </source>
</reference>
<reference key="3">
    <citation type="journal article" date="2010" name="Cell">
        <title>A tissue-specific atlas of mouse protein phosphorylation and expression.</title>
        <authorList>
            <person name="Huttlin E.L."/>
            <person name="Jedrychowski M.P."/>
            <person name="Elias J.E."/>
            <person name="Goswami T."/>
            <person name="Rad R."/>
            <person name="Beausoleil S.A."/>
            <person name="Villen J."/>
            <person name="Haas W."/>
            <person name="Sowa M.E."/>
            <person name="Gygi S.P."/>
        </authorList>
    </citation>
    <scope>IDENTIFICATION BY MASS SPECTROMETRY [LARGE SCALE ANALYSIS]</scope>
    <source>
        <tissue>Brain</tissue>
    </source>
</reference>
<reference key="4">
    <citation type="journal article" date="2019" name="Neurosci. Lett.">
        <title>FAM81A protein, a novel component of the postsynaptic density in adult brain.</title>
        <authorList>
            <person name="Dosemeci A."/>
            <person name="Loo H.K."/>
            <person name="Toy D."/>
            <person name="Winters C.A."/>
            <person name="Reese T.S."/>
            <person name="Tao-Cheng J.H."/>
        </authorList>
    </citation>
    <scope>SUBCELLULAR LOCATION</scope>
</reference>
<reference key="5">
    <citation type="journal article" date="2024" name="PLoS Biol.">
        <title>FAM81A is a postsynaptic protein that regulates the condensation of postsynaptic proteins via liquid-liquid phase separation.</title>
        <authorList>
            <person name="Kaizuka T."/>
            <person name="Hirouchi T."/>
            <person name="Saneyoshi T."/>
            <person name="Shirafuji T."/>
            <person name="Collins M.O."/>
            <person name="Grant S.G.N."/>
            <person name="Hayashi Y."/>
            <person name="Takumi T."/>
        </authorList>
    </citation>
    <scope>FUNCTION</scope>
    <scope>INTERACTION WITH DLG4; GRIN2B AND SYNGAP1</scope>
    <scope>SUBCELLULAR LOCATION</scope>
    <scope>TISSUE SPECIFICITY</scope>
</reference>
<name>FA81A_MOUSE</name>
<keyword id="KW-0175">Coiled coil</keyword>
<keyword id="KW-0963">Cytoplasm</keyword>
<keyword id="KW-1185">Reference proteome</keyword>
<keyword id="KW-0770">Synapse</keyword>
<gene>
    <name type="primary">Fam81a</name>
</gene>
<proteinExistence type="evidence at protein level"/>
<sequence length="364" mass="41710">MHLRRVKTMPRHSQSLTMAPYSSVSLVEQLEDRILCHEKTTAALVEHAFRIKDDIVSSLQKMQNKGGGDRLARLFLEEHIRNITAIVKQLNRDIEVLQEQIRARDNISYGTNSALKTLEMRQLSGLGDLRGRVARCDASIARLSAEHKSTYEGLQHLNKEQQAAKLILETKIKDAEGQISQLLSRVDLSISEQSTKLKMSHRDSNHQLQLLDTKFKGTVEELSNQILSARSWLQQEQERIEKELLQKIDHLSLIVKENSGANERDVEKKLSQMSARLDKIEESQKRNAEGQRKPDEEKVHGRISKLELQMTEDMKEMKAEVNAGFSAIYESIGSLRQVLEAKMKLDRDQLQKQIQQMQKPETAM</sequence>
<accession>Q3UXZ6</accession>
<accession>Q8BQV1</accession>
<accession>Q8C548</accession>
<accession>Q8R3B5</accession>
<accession>Q9D369</accession>
<protein>
    <recommendedName>
        <fullName>Protein FAM81A</fullName>
    </recommendedName>
</protein>
<evidence type="ECO:0000250" key="1">
    <source>
        <dbReference type="UniProtKB" id="Q8TBF8"/>
    </source>
</evidence>
<evidence type="ECO:0000255" key="2"/>
<evidence type="ECO:0000256" key="3">
    <source>
        <dbReference type="SAM" id="MobiDB-lite"/>
    </source>
</evidence>
<evidence type="ECO:0000269" key="4">
    <source>
    </source>
</evidence>
<evidence type="ECO:0000269" key="5">
    <source>
    </source>
</evidence>
<evidence type="ECO:0000305" key="6"/>
<feature type="chain" id="PRO_0000265120" description="Protein FAM81A">
    <location>
        <begin position="1"/>
        <end position="364"/>
    </location>
</feature>
<feature type="region of interest" description="Disordered" evidence="3">
    <location>
        <begin position="281"/>
        <end position="300"/>
    </location>
</feature>
<feature type="coiled-coil region" evidence="2">
    <location>
        <begin position="75"/>
        <end position="107"/>
    </location>
</feature>
<feature type="coiled-coil region" evidence="2">
    <location>
        <begin position="158"/>
        <end position="189"/>
    </location>
</feature>
<feature type="coiled-coil region" evidence="2">
    <location>
        <begin position="261"/>
        <end position="287"/>
    </location>
</feature>
<feature type="sequence conflict" description="In Ref. 1; BAE22417." evidence="6" ref="1">
    <original>E</original>
    <variation>K</variation>
    <location>
        <position position="31"/>
    </location>
</feature>
<feature type="sequence conflict" description="In Ref. 1; BAC37676." evidence="6" ref="1">
    <original>D</original>
    <variation>K</variation>
    <location>
        <position position="32"/>
    </location>
</feature>
<feature type="sequence conflict" description="In Ref. 1; BAC37676." evidence="6" ref="1">
    <original>ALVEHAFRIKDDIVSSLQKMQN</original>
    <variation>GTGWSMASGFKMKSSQFGKKCRI</variation>
    <location>
        <begin position="43"/>
        <end position="64"/>
    </location>
</feature>
<feature type="sequence conflict" description="In Ref. 1; BAC37676." evidence="6" ref="1">
    <original>G</original>
    <variation>S</variation>
    <location>
        <position position="68"/>
    </location>
</feature>
<feature type="sequence conflict" description="In Ref. 1; BAB31146." evidence="6" ref="1">
    <original>QLSGLGDLRGRVARCDAS</original>
    <variation>HSLAWEISEEELQSATPT</variation>
    <location>
        <begin position="122"/>
        <end position="139"/>
    </location>
</feature>
<feature type="sequence conflict" description="In Ref. 1; BAC32712." evidence="6" ref="1">
    <original>S</original>
    <variation>Y</variation>
    <location>
        <position position="189"/>
    </location>
</feature>
<dbReference type="EMBL" id="AK018282">
    <property type="protein sequence ID" value="BAB31146.1"/>
    <property type="molecule type" value="mRNA"/>
</dbReference>
<dbReference type="EMBL" id="AK044090">
    <property type="protein sequence ID" value="BAC31769.1"/>
    <property type="molecule type" value="mRNA"/>
</dbReference>
<dbReference type="EMBL" id="AK046408">
    <property type="protein sequence ID" value="BAC32712.1"/>
    <property type="molecule type" value="mRNA"/>
</dbReference>
<dbReference type="EMBL" id="AK079541">
    <property type="protein sequence ID" value="BAC37676.1"/>
    <property type="molecule type" value="mRNA"/>
</dbReference>
<dbReference type="EMBL" id="AK135091">
    <property type="protein sequence ID" value="BAE22417.1"/>
    <property type="molecule type" value="mRNA"/>
</dbReference>
<dbReference type="EMBL" id="BC025646">
    <property type="protein sequence ID" value="AAH25646.1"/>
    <property type="molecule type" value="mRNA"/>
</dbReference>
<dbReference type="CCDS" id="CCDS40679.1"/>
<dbReference type="RefSeq" id="NP_001420672.1">
    <property type="nucleotide sequence ID" value="NM_001433743.1"/>
</dbReference>
<dbReference type="RefSeq" id="NP_001420673.1">
    <property type="nucleotide sequence ID" value="NM_001433744.1"/>
</dbReference>
<dbReference type="RefSeq" id="NP_001420674.1">
    <property type="nucleotide sequence ID" value="NM_001433745.1"/>
</dbReference>
<dbReference type="RefSeq" id="NP_084060.1">
    <property type="nucleotide sequence ID" value="NM_029784.3"/>
</dbReference>
<dbReference type="RefSeq" id="XP_006511613.1">
    <property type="nucleotide sequence ID" value="XM_006511550.3"/>
</dbReference>
<dbReference type="RefSeq" id="XP_006511614.1">
    <property type="nucleotide sequence ID" value="XM_006511551.2"/>
</dbReference>
<dbReference type="SMR" id="Q3UXZ6"/>
<dbReference type="BioGRID" id="218377">
    <property type="interactions" value="2"/>
</dbReference>
<dbReference type="FunCoup" id="Q3UXZ6">
    <property type="interactions" value="92"/>
</dbReference>
<dbReference type="IntAct" id="Q3UXZ6">
    <property type="interactions" value="3"/>
</dbReference>
<dbReference type="MINT" id="Q3UXZ6"/>
<dbReference type="STRING" id="10090.ENSMUSP00000034749"/>
<dbReference type="iPTMnet" id="Q3UXZ6"/>
<dbReference type="PhosphoSitePlus" id="Q3UXZ6"/>
<dbReference type="PaxDb" id="10090-ENSMUSP00000034749"/>
<dbReference type="PeptideAtlas" id="Q3UXZ6"/>
<dbReference type="ProteomicsDB" id="267697"/>
<dbReference type="Antibodypedia" id="42746">
    <property type="antibodies" value="68 antibodies from 13 providers"/>
</dbReference>
<dbReference type="DNASU" id="76886"/>
<dbReference type="Ensembl" id="ENSMUST00000034749.16">
    <property type="protein sequence ID" value="ENSMUSP00000034749.9"/>
    <property type="gene ID" value="ENSMUSG00000032224.16"/>
</dbReference>
<dbReference type="GeneID" id="76886"/>
<dbReference type="KEGG" id="mmu:76886"/>
<dbReference type="UCSC" id="uc009qnu.1">
    <property type="organism name" value="mouse"/>
</dbReference>
<dbReference type="AGR" id="MGI:1924136"/>
<dbReference type="CTD" id="145773"/>
<dbReference type="MGI" id="MGI:1924136">
    <property type="gene designation" value="Fam81a"/>
</dbReference>
<dbReference type="VEuPathDB" id="HostDB:ENSMUSG00000032224"/>
<dbReference type="eggNOG" id="ENOG502S0X8">
    <property type="taxonomic scope" value="Eukaryota"/>
</dbReference>
<dbReference type="GeneTree" id="ENSGT00390000004985"/>
<dbReference type="HOGENOM" id="CLU_056304_1_0_1"/>
<dbReference type="InParanoid" id="Q3UXZ6"/>
<dbReference type="OMA" id="MQKITME"/>
<dbReference type="OrthoDB" id="10014002at2759"/>
<dbReference type="PhylomeDB" id="Q3UXZ6"/>
<dbReference type="TreeFam" id="TF335682"/>
<dbReference type="BioGRID-ORCS" id="76886">
    <property type="hits" value="1 hit in 75 CRISPR screens"/>
</dbReference>
<dbReference type="ChiTaRS" id="Fam81a">
    <property type="organism name" value="mouse"/>
</dbReference>
<dbReference type="PRO" id="PR:Q3UXZ6"/>
<dbReference type="Proteomes" id="UP000000589">
    <property type="component" value="Chromosome 9"/>
</dbReference>
<dbReference type="RNAct" id="Q3UXZ6">
    <property type="molecule type" value="protein"/>
</dbReference>
<dbReference type="Bgee" id="ENSMUSG00000032224">
    <property type="expression patterns" value="Expressed in choroid plexus epithelium and 189 other cell types or tissues"/>
</dbReference>
<dbReference type="ExpressionAtlas" id="Q3UXZ6">
    <property type="expression patterns" value="baseline and differential"/>
</dbReference>
<dbReference type="GO" id="GO:0005737">
    <property type="term" value="C:cytoplasm"/>
    <property type="evidence" value="ECO:0000250"/>
    <property type="project" value="UniProtKB"/>
</dbReference>
<dbReference type="GO" id="GO:0098978">
    <property type="term" value="C:glutamatergic synapse"/>
    <property type="evidence" value="ECO:0007669"/>
    <property type="project" value="Ensembl"/>
</dbReference>
<dbReference type="GO" id="GO:0014069">
    <property type="term" value="C:postsynaptic density"/>
    <property type="evidence" value="ECO:0000314"/>
    <property type="project" value="UniProtKB"/>
</dbReference>
<dbReference type="GO" id="GO:0099092">
    <property type="term" value="C:postsynaptic density, intracellular component"/>
    <property type="evidence" value="ECO:0007669"/>
    <property type="project" value="Ensembl"/>
</dbReference>
<dbReference type="GO" id="GO:0140693">
    <property type="term" value="F:molecular condensate scaffold activity"/>
    <property type="evidence" value="ECO:0000314"/>
    <property type="project" value="UniProtKB"/>
</dbReference>
<dbReference type="InterPro" id="IPR029619">
    <property type="entry name" value="FAM81"/>
</dbReference>
<dbReference type="PANTHER" id="PTHR22420">
    <property type="entry name" value="PROTEIN FAM81A"/>
    <property type="match status" value="1"/>
</dbReference>
<dbReference type="PANTHER" id="PTHR22420:SF2">
    <property type="entry name" value="PROTEIN FAM81A"/>
    <property type="match status" value="1"/>
</dbReference>
<comment type="function">
    <text evidence="5">Facilitates the interaction and assembly of proteins within the postsynaptic density by promoting the condensation of postsynaptic proteins via liquid-liquid phase separation (PubMed:38452102). Required for neuronal activity (PubMed:38452102). Accumulation at the postsynaptic density results in enlargement of dendritic spines (PubMed:38452102).</text>
</comment>
<comment type="subunit">
    <text evidence="5">Interacts with DLG4/PSD-95, GRIN2B/GLUN2B and SYNGAP1; the interactions facilitate condensate formation.</text>
</comment>
<comment type="subcellular location">
    <subcellularLocation>
        <location evidence="4 5">Postsynaptic density</location>
    </subcellularLocation>
    <subcellularLocation>
        <location evidence="1">Cytoplasm</location>
    </subcellularLocation>
</comment>
<comment type="tissue specificity">
    <text evidence="5">Expressed in most regions of the brain (at protein level).</text>
</comment>
<comment type="similarity">
    <text evidence="6">Belongs to the FAM81 family.</text>
</comment>
<organism>
    <name type="scientific">Mus musculus</name>
    <name type="common">Mouse</name>
    <dbReference type="NCBI Taxonomy" id="10090"/>
    <lineage>
        <taxon>Eukaryota</taxon>
        <taxon>Metazoa</taxon>
        <taxon>Chordata</taxon>
        <taxon>Craniata</taxon>
        <taxon>Vertebrata</taxon>
        <taxon>Euteleostomi</taxon>
        <taxon>Mammalia</taxon>
        <taxon>Eutheria</taxon>
        <taxon>Euarchontoglires</taxon>
        <taxon>Glires</taxon>
        <taxon>Rodentia</taxon>
        <taxon>Myomorpha</taxon>
        <taxon>Muroidea</taxon>
        <taxon>Muridae</taxon>
        <taxon>Murinae</taxon>
        <taxon>Mus</taxon>
        <taxon>Mus</taxon>
    </lineage>
</organism>